<comment type="function">
    <text evidence="1">Produces ATP from ADP in the presence of a proton gradient across the membrane. The alpha chain is a regulatory subunit.</text>
</comment>
<comment type="catalytic activity">
    <reaction evidence="1">
        <text>ATP + H2O + 4 H(+)(in) = ADP + phosphate + 5 H(+)(out)</text>
        <dbReference type="Rhea" id="RHEA:57720"/>
        <dbReference type="ChEBI" id="CHEBI:15377"/>
        <dbReference type="ChEBI" id="CHEBI:15378"/>
        <dbReference type="ChEBI" id="CHEBI:30616"/>
        <dbReference type="ChEBI" id="CHEBI:43474"/>
        <dbReference type="ChEBI" id="CHEBI:456216"/>
        <dbReference type="EC" id="7.1.2.2"/>
    </reaction>
</comment>
<comment type="subunit">
    <text evidence="1">F-type ATPases have 2 components, CF(1) - the catalytic core - and CF(0) - the membrane proton channel. CF(1) has five subunits: alpha(3), beta(3), gamma(1), delta(1), epsilon(1). CF(0) has three main subunits: a(1), b(2) and c(9-12). The alpha and beta chains form an alternating ring which encloses part of the gamma chain. CF(1) is attached to CF(0) by a central stalk formed by the gamma and epsilon chains, while a peripheral stalk is formed by the delta and b chains.</text>
</comment>
<comment type="subcellular location">
    <subcellularLocation>
        <location evidence="1">Cell inner membrane</location>
        <topology evidence="1">Peripheral membrane protein</topology>
    </subcellularLocation>
</comment>
<comment type="similarity">
    <text evidence="1">Belongs to the ATPase alpha/beta chains family.</text>
</comment>
<proteinExistence type="inferred from homology"/>
<sequence length="513" mass="55912">MQLNPSEISELIKSRIQGLEASADVRNQGTVISVTDGIVRIHGLSDVMQGEMLEFPGNTFGLALNLERDSVGAVILGEYEHISEGDIVKTTGRILEVPVGPELVGRVVDALGNPIDGKGPVNAKLTDAIEKIAPGVIWRKSVSQPVQTGLKSIDSMVPIGRGQRELIIGDRQCGKTAVAIDTIINQKGKDLICIYVAIGQKASSIMNVVRKLEETGALEYTIVVAASASESAAMQYLAPYAGCTMGEYFRDRGQDALIIYDDLTKQAWAYRQISLLLRRPPGREAYPGDVFYLHSRLLERAARVSEEYVEKFTNGEVKGKSGSLTALPVIETQAGDVTAFVPTNVISITDGQIFLETDLFNAGIRPAINAGVSVSRVGGAAQTKVVKKLSGGIRTDLAQYRELAAFAQFASDLDEATRKQLERGRRVTELLKQPQYQPLQVWELAVSLFSANNGYLDDLDVKDVLPFEKGLREYLKTSHADLIKRIEDTKDLSKDDESALHAALKDFKKSGAY</sequence>
<feature type="chain" id="PRO_0000339023" description="ATP synthase subunit alpha 1">
    <location>
        <begin position="1"/>
        <end position="513"/>
    </location>
</feature>
<feature type="binding site" evidence="1">
    <location>
        <begin position="169"/>
        <end position="176"/>
    </location>
    <ligand>
        <name>ATP</name>
        <dbReference type="ChEBI" id="CHEBI:30616"/>
    </ligand>
</feature>
<feature type="site" description="Required for activity" evidence="1">
    <location>
        <position position="373"/>
    </location>
</feature>
<dbReference type="EC" id="7.1.2.2" evidence="1"/>
<dbReference type="EMBL" id="CP000572">
    <property type="protein sequence ID" value="ABN91953.1"/>
    <property type="molecule type" value="Genomic_DNA"/>
</dbReference>
<dbReference type="SMR" id="A3P0Z2"/>
<dbReference type="KEGG" id="bpl:BURPS1106A_4044"/>
<dbReference type="HOGENOM" id="CLU_010091_2_1_4"/>
<dbReference type="Proteomes" id="UP000006738">
    <property type="component" value="Chromosome I"/>
</dbReference>
<dbReference type="GO" id="GO:0005886">
    <property type="term" value="C:plasma membrane"/>
    <property type="evidence" value="ECO:0007669"/>
    <property type="project" value="UniProtKB-SubCell"/>
</dbReference>
<dbReference type="GO" id="GO:0045259">
    <property type="term" value="C:proton-transporting ATP synthase complex"/>
    <property type="evidence" value="ECO:0007669"/>
    <property type="project" value="UniProtKB-KW"/>
</dbReference>
<dbReference type="GO" id="GO:0043531">
    <property type="term" value="F:ADP binding"/>
    <property type="evidence" value="ECO:0007669"/>
    <property type="project" value="TreeGrafter"/>
</dbReference>
<dbReference type="GO" id="GO:0005524">
    <property type="term" value="F:ATP binding"/>
    <property type="evidence" value="ECO:0007669"/>
    <property type="project" value="UniProtKB-UniRule"/>
</dbReference>
<dbReference type="GO" id="GO:0046933">
    <property type="term" value="F:proton-transporting ATP synthase activity, rotational mechanism"/>
    <property type="evidence" value="ECO:0007669"/>
    <property type="project" value="UniProtKB-UniRule"/>
</dbReference>
<dbReference type="CDD" id="cd18113">
    <property type="entry name" value="ATP-synt_F1_alpha_C"/>
    <property type="match status" value="1"/>
</dbReference>
<dbReference type="CDD" id="cd18116">
    <property type="entry name" value="ATP-synt_F1_alpha_N"/>
    <property type="match status" value="1"/>
</dbReference>
<dbReference type="CDD" id="cd01132">
    <property type="entry name" value="F1-ATPase_alpha_CD"/>
    <property type="match status" value="1"/>
</dbReference>
<dbReference type="FunFam" id="1.20.150.20:FF:000001">
    <property type="entry name" value="ATP synthase subunit alpha"/>
    <property type="match status" value="1"/>
</dbReference>
<dbReference type="FunFam" id="2.40.30.20:FF:000001">
    <property type="entry name" value="ATP synthase subunit alpha"/>
    <property type="match status" value="1"/>
</dbReference>
<dbReference type="FunFam" id="3.40.50.300:FF:000002">
    <property type="entry name" value="ATP synthase subunit alpha"/>
    <property type="match status" value="1"/>
</dbReference>
<dbReference type="Gene3D" id="2.40.30.20">
    <property type="match status" value="1"/>
</dbReference>
<dbReference type="Gene3D" id="1.20.150.20">
    <property type="entry name" value="ATP synthase alpha/beta chain, C-terminal domain"/>
    <property type="match status" value="1"/>
</dbReference>
<dbReference type="Gene3D" id="3.40.50.300">
    <property type="entry name" value="P-loop containing nucleotide triphosphate hydrolases"/>
    <property type="match status" value="1"/>
</dbReference>
<dbReference type="HAMAP" id="MF_01346">
    <property type="entry name" value="ATP_synth_alpha_bact"/>
    <property type="match status" value="1"/>
</dbReference>
<dbReference type="InterPro" id="IPR023366">
    <property type="entry name" value="ATP_synth_asu-like_sf"/>
</dbReference>
<dbReference type="InterPro" id="IPR000793">
    <property type="entry name" value="ATP_synth_asu_C"/>
</dbReference>
<dbReference type="InterPro" id="IPR038376">
    <property type="entry name" value="ATP_synth_asu_C_sf"/>
</dbReference>
<dbReference type="InterPro" id="IPR033732">
    <property type="entry name" value="ATP_synth_F1_a_nt-bd_dom"/>
</dbReference>
<dbReference type="InterPro" id="IPR005294">
    <property type="entry name" value="ATP_synth_F1_asu"/>
</dbReference>
<dbReference type="InterPro" id="IPR020003">
    <property type="entry name" value="ATPase_a/bsu_AS"/>
</dbReference>
<dbReference type="InterPro" id="IPR004100">
    <property type="entry name" value="ATPase_F1/V1/A1_a/bsu_N"/>
</dbReference>
<dbReference type="InterPro" id="IPR036121">
    <property type="entry name" value="ATPase_F1/V1/A1_a/bsu_N_sf"/>
</dbReference>
<dbReference type="InterPro" id="IPR000194">
    <property type="entry name" value="ATPase_F1/V1/A1_a/bsu_nucl-bd"/>
</dbReference>
<dbReference type="InterPro" id="IPR027417">
    <property type="entry name" value="P-loop_NTPase"/>
</dbReference>
<dbReference type="NCBIfam" id="TIGR00962">
    <property type="entry name" value="atpA"/>
    <property type="match status" value="1"/>
</dbReference>
<dbReference type="NCBIfam" id="NF009884">
    <property type="entry name" value="PRK13343.1"/>
    <property type="match status" value="1"/>
</dbReference>
<dbReference type="PANTHER" id="PTHR48082">
    <property type="entry name" value="ATP SYNTHASE SUBUNIT ALPHA, MITOCHONDRIAL"/>
    <property type="match status" value="1"/>
</dbReference>
<dbReference type="PANTHER" id="PTHR48082:SF2">
    <property type="entry name" value="ATP SYNTHASE SUBUNIT ALPHA, MITOCHONDRIAL"/>
    <property type="match status" value="1"/>
</dbReference>
<dbReference type="Pfam" id="PF00006">
    <property type="entry name" value="ATP-synt_ab"/>
    <property type="match status" value="1"/>
</dbReference>
<dbReference type="Pfam" id="PF00306">
    <property type="entry name" value="ATP-synt_ab_C"/>
    <property type="match status" value="1"/>
</dbReference>
<dbReference type="Pfam" id="PF02874">
    <property type="entry name" value="ATP-synt_ab_N"/>
    <property type="match status" value="1"/>
</dbReference>
<dbReference type="PIRSF" id="PIRSF039088">
    <property type="entry name" value="F_ATPase_subunit_alpha"/>
    <property type="match status" value="1"/>
</dbReference>
<dbReference type="SUPFAM" id="SSF47917">
    <property type="entry name" value="C-terminal domain of alpha and beta subunits of F1 ATP synthase"/>
    <property type="match status" value="1"/>
</dbReference>
<dbReference type="SUPFAM" id="SSF50615">
    <property type="entry name" value="N-terminal domain of alpha and beta subunits of F1 ATP synthase"/>
    <property type="match status" value="1"/>
</dbReference>
<dbReference type="SUPFAM" id="SSF52540">
    <property type="entry name" value="P-loop containing nucleoside triphosphate hydrolases"/>
    <property type="match status" value="1"/>
</dbReference>
<dbReference type="PROSITE" id="PS00152">
    <property type="entry name" value="ATPASE_ALPHA_BETA"/>
    <property type="match status" value="1"/>
</dbReference>
<organism>
    <name type="scientific">Burkholderia pseudomallei (strain 1106a)</name>
    <dbReference type="NCBI Taxonomy" id="357348"/>
    <lineage>
        <taxon>Bacteria</taxon>
        <taxon>Pseudomonadati</taxon>
        <taxon>Pseudomonadota</taxon>
        <taxon>Betaproteobacteria</taxon>
        <taxon>Burkholderiales</taxon>
        <taxon>Burkholderiaceae</taxon>
        <taxon>Burkholderia</taxon>
        <taxon>pseudomallei group</taxon>
    </lineage>
</organism>
<accession>A3P0Z2</accession>
<evidence type="ECO:0000255" key="1">
    <source>
        <dbReference type="HAMAP-Rule" id="MF_01346"/>
    </source>
</evidence>
<protein>
    <recommendedName>
        <fullName evidence="1">ATP synthase subunit alpha 1</fullName>
        <ecNumber evidence="1">7.1.2.2</ecNumber>
    </recommendedName>
    <alternativeName>
        <fullName evidence="1">ATP synthase F1 sector subunit alpha 1</fullName>
    </alternativeName>
    <alternativeName>
        <fullName evidence="1">F-ATPase subunit alpha 1</fullName>
    </alternativeName>
</protein>
<gene>
    <name evidence="1" type="primary">atpA1</name>
    <name type="ordered locus">BURPS1106A_4044</name>
</gene>
<keyword id="KW-0066">ATP synthesis</keyword>
<keyword id="KW-0067">ATP-binding</keyword>
<keyword id="KW-0997">Cell inner membrane</keyword>
<keyword id="KW-1003">Cell membrane</keyword>
<keyword id="KW-0139">CF(1)</keyword>
<keyword id="KW-0375">Hydrogen ion transport</keyword>
<keyword id="KW-0406">Ion transport</keyword>
<keyword id="KW-0472">Membrane</keyword>
<keyword id="KW-0547">Nucleotide-binding</keyword>
<keyword id="KW-1278">Translocase</keyword>
<keyword id="KW-0813">Transport</keyword>
<name>ATPA1_BURP0</name>
<reference key="1">
    <citation type="journal article" date="2010" name="Genome Biol. Evol.">
        <title>Continuing evolution of Burkholderia mallei through genome reduction and large-scale rearrangements.</title>
        <authorList>
            <person name="Losada L."/>
            <person name="Ronning C.M."/>
            <person name="DeShazer D."/>
            <person name="Woods D."/>
            <person name="Fedorova N."/>
            <person name="Kim H.S."/>
            <person name="Shabalina S.A."/>
            <person name="Pearson T.R."/>
            <person name="Brinkac L."/>
            <person name="Tan P."/>
            <person name="Nandi T."/>
            <person name="Crabtree J."/>
            <person name="Badger J."/>
            <person name="Beckstrom-Sternberg S."/>
            <person name="Saqib M."/>
            <person name="Schutzer S.E."/>
            <person name="Keim P."/>
            <person name="Nierman W.C."/>
        </authorList>
    </citation>
    <scope>NUCLEOTIDE SEQUENCE [LARGE SCALE GENOMIC DNA]</scope>
    <source>
        <strain>1106a</strain>
    </source>
</reference>